<comment type="function">
    <text evidence="1">DNA-dependent RNA polymerase catalyzes the transcription of DNA into RNA using the four ribonucleoside triphosphates as substrates.</text>
</comment>
<comment type="catalytic activity">
    <reaction evidence="1">
        <text>RNA(n) + a ribonucleoside 5'-triphosphate = RNA(n+1) + diphosphate</text>
        <dbReference type="Rhea" id="RHEA:21248"/>
        <dbReference type="Rhea" id="RHEA-COMP:14527"/>
        <dbReference type="Rhea" id="RHEA-COMP:17342"/>
        <dbReference type="ChEBI" id="CHEBI:33019"/>
        <dbReference type="ChEBI" id="CHEBI:61557"/>
        <dbReference type="ChEBI" id="CHEBI:140395"/>
        <dbReference type="EC" id="2.7.7.6"/>
    </reaction>
</comment>
<comment type="subunit">
    <text evidence="1">The RNAP catalytic core consists of 2 alpha, 1 beta, 1 beta' and 1 omega subunit. When a sigma factor is associated with the core the holoenzyme is formed, which can initiate transcription.</text>
</comment>
<comment type="similarity">
    <text evidence="1">Belongs to the RNA polymerase beta chain family.</text>
</comment>
<keyword id="KW-0240">DNA-directed RNA polymerase</keyword>
<keyword id="KW-0548">Nucleotidyltransferase</keyword>
<keyword id="KW-1185">Reference proteome</keyword>
<keyword id="KW-0804">Transcription</keyword>
<keyword id="KW-0808">Transferase</keyword>
<sequence>MAQSYVGQKRIRRYYGKIREVLEMPNLIEVQKSSYDLFLKSGDGPKAADGEGIQGVFQSVFPIKDFNETAVLEFVKYELEKPKYDVDECQQRDMTYAAPLKVTLRLIVFDVDETTGARSVKDIKEQDVYMGDMPLMTANGTFIVNGTERVIVSQMHRSPGVFFDHDKGKTHSSGKLLFACRIIPYRGSWLDFEFDAKDIVFARIDRRRKLPVTTLLYALGMDQEGIMDAYYETVNFKHQKNRGWVTRFFPERVRGTRPTYDLVDAATGEVILKAGEKATPRMVKKWIDEAQITELLVPFDHIVGRYVAQDIINEETGEIWVEAGDELTMEYDRDGEVKGGTLKLLLDQGITDIPVLDIDNVNVGPYIRNTMAADKNMGRDTALMDIYRVMRPGEPPTVEAASNLFDTLFFDSERYDLSAVGRVKMNMRLDLGKPDTQRTLDRDDIIACIKALTELRDGKGEIDDIDHLGNRRVRSVGELMENQYRVGLLRMERAIKERMSSVEIDTIMPQDLINAKPAAAAVREFFGSSQLSQFMDQTNPLSEVTHKRRLSALGPGGLTRERAGFEVRDVHPTHYGRMCPIETPEGQNIGLINSLATFARVNKYGFIETPYRKVVEGAVTDDVVYMSATEEMRHTVAQANAQLDEEGRFVSDLISSRKAGEFMLNPPDAIDLIDVSPKQLVSVAASLIPFLENDDANRALMGSNMQRQAVPLLQSDAPFVGTGIEAVVARDSGAAIMARRAGVIDQVDATRIVVRATEMLEPGEPGVDIYRLRKFKRSNQSSCINQRPLVKVGDVVHRGEVVADGPCTDMGELALGRNVIVAFMPWNGYNYEDSILISERILRDDVYTSIHIEEYEVAARDTKLGPEEITRDIPNVGEEALRNLDEAGIVYIGAEVQPGDILVGKITPKGESPMTPEEKLLRAIFGEKASDVRDTSLRLPPGAYGTIVEVRVFNRHGVDKDERALQIEREEVERLARDRDDELAILERNIYSRLRTLIMGKTAVKGPKGIRAGSEINEDLLSTLSRGQWWQLALGEEADAKEVEALHEQFEAQKRALDHRFEDKVEKVRRGDDLPPGVMKMVKVFVAVKRKLQPGDKMAGRHGNKGVISKVVPIEDMPFLADGTHVDLVLNPLGVPSRMNVGQILETHMGWAARGLGIKIDEALQDYRRSGDLTPVKEAMRLAYGDETYEGAFGDREDEDLVEMAGRVTKGVPIATPVFDGAKEPDVNDALRRAGFDQSGQSIVFDGRTGEQFARPVTVGVKYMLKLHHLVDDKLHARSTGPYSLVTQQPLGGKAQFGGQRLGEMEVWALEAYGAAYTLQEMLTVKSDDVAGRTKMYESIVKGEDNFEAGVPESFNVLVKEVRGLGLNMELLDADEE</sequence>
<accession>Q3J5T0</accession>
<dbReference type="EC" id="2.7.7.6" evidence="1"/>
<dbReference type="EMBL" id="CP000143">
    <property type="protein sequence ID" value="ABA77854.1"/>
    <property type="molecule type" value="Genomic_DNA"/>
</dbReference>
<dbReference type="RefSeq" id="WP_002722478.1">
    <property type="nucleotide sequence ID" value="NZ_CP030271.1"/>
</dbReference>
<dbReference type="RefSeq" id="YP_351755.1">
    <property type="nucleotide sequence ID" value="NC_007493.2"/>
</dbReference>
<dbReference type="SMR" id="Q3J5T0"/>
<dbReference type="STRING" id="272943.RSP_1699"/>
<dbReference type="EnsemblBacteria" id="ABA77854">
    <property type="protein sequence ID" value="ABA77854"/>
    <property type="gene ID" value="RSP_1699"/>
</dbReference>
<dbReference type="GeneID" id="67445492"/>
<dbReference type="KEGG" id="rsp:RSP_1699"/>
<dbReference type="PATRIC" id="fig|272943.9.peg.584"/>
<dbReference type="eggNOG" id="COG0085">
    <property type="taxonomic scope" value="Bacteria"/>
</dbReference>
<dbReference type="OrthoDB" id="9803954at2"/>
<dbReference type="PhylomeDB" id="Q3J5T0"/>
<dbReference type="Proteomes" id="UP000002703">
    <property type="component" value="Chromosome 1"/>
</dbReference>
<dbReference type="GO" id="GO:0000428">
    <property type="term" value="C:DNA-directed RNA polymerase complex"/>
    <property type="evidence" value="ECO:0007669"/>
    <property type="project" value="UniProtKB-KW"/>
</dbReference>
<dbReference type="GO" id="GO:0003677">
    <property type="term" value="F:DNA binding"/>
    <property type="evidence" value="ECO:0007669"/>
    <property type="project" value="UniProtKB-UniRule"/>
</dbReference>
<dbReference type="GO" id="GO:0003899">
    <property type="term" value="F:DNA-directed RNA polymerase activity"/>
    <property type="evidence" value="ECO:0007669"/>
    <property type="project" value="UniProtKB-UniRule"/>
</dbReference>
<dbReference type="GO" id="GO:0032549">
    <property type="term" value="F:ribonucleoside binding"/>
    <property type="evidence" value="ECO:0007669"/>
    <property type="project" value="InterPro"/>
</dbReference>
<dbReference type="GO" id="GO:0006351">
    <property type="term" value="P:DNA-templated transcription"/>
    <property type="evidence" value="ECO:0007669"/>
    <property type="project" value="UniProtKB-UniRule"/>
</dbReference>
<dbReference type="CDD" id="cd00653">
    <property type="entry name" value="RNA_pol_B_RPB2"/>
    <property type="match status" value="1"/>
</dbReference>
<dbReference type="FunFam" id="3.90.1800.10:FF:000001">
    <property type="entry name" value="DNA-directed RNA polymerase subunit beta"/>
    <property type="match status" value="1"/>
</dbReference>
<dbReference type="Gene3D" id="2.40.50.100">
    <property type="match status" value="1"/>
</dbReference>
<dbReference type="Gene3D" id="2.40.50.150">
    <property type="match status" value="1"/>
</dbReference>
<dbReference type="Gene3D" id="3.90.1100.10">
    <property type="match status" value="2"/>
</dbReference>
<dbReference type="Gene3D" id="2.30.150.10">
    <property type="entry name" value="DNA-directed RNA polymerase, beta subunit, external 1 domain"/>
    <property type="match status" value="1"/>
</dbReference>
<dbReference type="Gene3D" id="2.40.270.10">
    <property type="entry name" value="DNA-directed RNA polymerase, subunit 2, domain 6"/>
    <property type="match status" value="1"/>
</dbReference>
<dbReference type="Gene3D" id="3.90.1800.10">
    <property type="entry name" value="RNA polymerase alpha subunit dimerisation domain"/>
    <property type="match status" value="1"/>
</dbReference>
<dbReference type="Gene3D" id="3.90.1110.10">
    <property type="entry name" value="RNA polymerase Rpb2, domain 2"/>
    <property type="match status" value="1"/>
</dbReference>
<dbReference type="HAMAP" id="MF_01321">
    <property type="entry name" value="RNApol_bact_RpoB"/>
    <property type="match status" value="1"/>
</dbReference>
<dbReference type="InterPro" id="IPR042107">
    <property type="entry name" value="DNA-dir_RNA_pol_bsu_ext_1_sf"/>
</dbReference>
<dbReference type="InterPro" id="IPR019462">
    <property type="entry name" value="DNA-dir_RNA_pol_bsu_external_1"/>
</dbReference>
<dbReference type="InterPro" id="IPR015712">
    <property type="entry name" value="DNA-dir_RNA_pol_su2"/>
</dbReference>
<dbReference type="InterPro" id="IPR007120">
    <property type="entry name" value="DNA-dir_RNAP_su2_dom"/>
</dbReference>
<dbReference type="InterPro" id="IPR037033">
    <property type="entry name" value="DNA-dir_RNAP_su2_hyb_sf"/>
</dbReference>
<dbReference type="InterPro" id="IPR010243">
    <property type="entry name" value="RNA_pol_bsu_bac"/>
</dbReference>
<dbReference type="InterPro" id="IPR007121">
    <property type="entry name" value="RNA_pol_bsu_CS"/>
</dbReference>
<dbReference type="InterPro" id="IPR007644">
    <property type="entry name" value="RNA_pol_bsu_protrusion"/>
</dbReference>
<dbReference type="InterPro" id="IPR007642">
    <property type="entry name" value="RNA_pol_Rpb2_2"/>
</dbReference>
<dbReference type="InterPro" id="IPR037034">
    <property type="entry name" value="RNA_pol_Rpb2_2_sf"/>
</dbReference>
<dbReference type="InterPro" id="IPR007645">
    <property type="entry name" value="RNA_pol_Rpb2_3"/>
</dbReference>
<dbReference type="InterPro" id="IPR007641">
    <property type="entry name" value="RNA_pol_Rpb2_7"/>
</dbReference>
<dbReference type="InterPro" id="IPR014724">
    <property type="entry name" value="RNA_pol_RPB2_OB-fold"/>
</dbReference>
<dbReference type="NCBIfam" id="NF001616">
    <property type="entry name" value="PRK00405.1"/>
    <property type="match status" value="1"/>
</dbReference>
<dbReference type="NCBIfam" id="TIGR02013">
    <property type="entry name" value="rpoB"/>
    <property type="match status" value="1"/>
</dbReference>
<dbReference type="PANTHER" id="PTHR20856">
    <property type="entry name" value="DNA-DIRECTED RNA POLYMERASE I SUBUNIT 2"/>
    <property type="match status" value="1"/>
</dbReference>
<dbReference type="Pfam" id="PF04563">
    <property type="entry name" value="RNA_pol_Rpb2_1"/>
    <property type="match status" value="1"/>
</dbReference>
<dbReference type="Pfam" id="PF04561">
    <property type="entry name" value="RNA_pol_Rpb2_2"/>
    <property type="match status" value="2"/>
</dbReference>
<dbReference type="Pfam" id="PF04565">
    <property type="entry name" value="RNA_pol_Rpb2_3"/>
    <property type="match status" value="1"/>
</dbReference>
<dbReference type="Pfam" id="PF10385">
    <property type="entry name" value="RNA_pol_Rpb2_45"/>
    <property type="match status" value="1"/>
</dbReference>
<dbReference type="Pfam" id="PF00562">
    <property type="entry name" value="RNA_pol_Rpb2_6"/>
    <property type="match status" value="1"/>
</dbReference>
<dbReference type="Pfam" id="PF04560">
    <property type="entry name" value="RNA_pol_Rpb2_7"/>
    <property type="match status" value="1"/>
</dbReference>
<dbReference type="SUPFAM" id="SSF64484">
    <property type="entry name" value="beta and beta-prime subunits of DNA dependent RNA-polymerase"/>
    <property type="match status" value="1"/>
</dbReference>
<dbReference type="PROSITE" id="PS01166">
    <property type="entry name" value="RNA_POL_BETA"/>
    <property type="match status" value="1"/>
</dbReference>
<gene>
    <name evidence="1" type="primary">rpoB</name>
    <name type="ordered locus">RHOS4_02860</name>
    <name type="ORF">RSP_1699</name>
</gene>
<reference key="1">
    <citation type="submission" date="2005-09" db="EMBL/GenBank/DDBJ databases">
        <title>Complete sequence of chromosome 1 of Rhodobacter sphaeroides 2.4.1.</title>
        <authorList>
            <person name="Copeland A."/>
            <person name="Lucas S."/>
            <person name="Lapidus A."/>
            <person name="Barry K."/>
            <person name="Detter J.C."/>
            <person name="Glavina T."/>
            <person name="Hammon N."/>
            <person name="Israni S."/>
            <person name="Pitluck S."/>
            <person name="Richardson P."/>
            <person name="Mackenzie C."/>
            <person name="Choudhary M."/>
            <person name="Larimer F."/>
            <person name="Hauser L.J."/>
            <person name="Land M."/>
            <person name="Donohue T.J."/>
            <person name="Kaplan S."/>
        </authorList>
    </citation>
    <scope>NUCLEOTIDE SEQUENCE [LARGE SCALE GENOMIC DNA]</scope>
    <source>
        <strain>ATCC 17023 / DSM 158 / JCM 6121 / CCUG 31486 / LMG 2827 / NBRC 12203 / NCIMB 8253 / ATH 2.4.1.</strain>
    </source>
</reference>
<proteinExistence type="inferred from homology"/>
<organism>
    <name type="scientific">Cereibacter sphaeroides (strain ATCC 17023 / DSM 158 / JCM 6121 / CCUG 31486 / LMG 2827 / NBRC 12203 / NCIMB 8253 / ATH 2.4.1.)</name>
    <name type="common">Rhodobacter sphaeroides</name>
    <dbReference type="NCBI Taxonomy" id="272943"/>
    <lineage>
        <taxon>Bacteria</taxon>
        <taxon>Pseudomonadati</taxon>
        <taxon>Pseudomonadota</taxon>
        <taxon>Alphaproteobacteria</taxon>
        <taxon>Rhodobacterales</taxon>
        <taxon>Paracoccaceae</taxon>
        <taxon>Cereibacter</taxon>
    </lineage>
</organism>
<evidence type="ECO:0000255" key="1">
    <source>
        <dbReference type="HAMAP-Rule" id="MF_01321"/>
    </source>
</evidence>
<name>RPOB_CERS4</name>
<feature type="chain" id="PRO_0000224100" description="DNA-directed RNA polymerase subunit beta">
    <location>
        <begin position="1"/>
        <end position="1377"/>
    </location>
</feature>
<protein>
    <recommendedName>
        <fullName evidence="1">DNA-directed RNA polymerase subunit beta</fullName>
        <shortName evidence="1">RNAP subunit beta</shortName>
        <ecNumber evidence="1">2.7.7.6</ecNumber>
    </recommendedName>
    <alternativeName>
        <fullName evidence="1">RNA polymerase subunit beta</fullName>
    </alternativeName>
    <alternativeName>
        <fullName evidence="1">Transcriptase subunit beta</fullName>
    </alternativeName>
</protein>